<reference key="1">
    <citation type="journal article" date="2001" name="Mol. Biol. Evol.">
        <title>Mitogenomic exploration of higher teleostean phylogenies: a case study for moderate-scale evolutionary genomics with 38 newly determined complete mitochondrial DNA sequences.</title>
        <authorList>
            <person name="Miya M."/>
            <person name="Kawaguchi A."/>
            <person name="Nishida M."/>
        </authorList>
    </citation>
    <scope>NUCLEOTIDE SEQUENCE [GENOMIC DNA]</scope>
</reference>
<organism>
    <name type="scientific">Zenopsis nebulosa</name>
    <name type="common">Mirror dory</name>
    <name type="synonym">Zeus nebulosus</name>
    <dbReference type="NCBI Taxonomy" id="94939"/>
    <lineage>
        <taxon>Eukaryota</taxon>
        <taxon>Metazoa</taxon>
        <taxon>Chordata</taxon>
        <taxon>Craniata</taxon>
        <taxon>Vertebrata</taxon>
        <taxon>Euteleostomi</taxon>
        <taxon>Actinopterygii</taxon>
        <taxon>Neopterygii</taxon>
        <taxon>Teleostei</taxon>
        <taxon>Neoteleostei</taxon>
        <taxon>Acanthomorphata</taxon>
        <taxon>Zeiogadaria</taxon>
        <taxon>Zeariae</taxon>
        <taxon>Zeiformes</taxon>
        <taxon>Zeidae</taxon>
        <taxon>Zenopsis</taxon>
    </lineage>
</organism>
<protein>
    <recommendedName>
        <fullName>Cytochrome b</fullName>
    </recommendedName>
    <alternativeName>
        <fullName>Complex III subunit 3</fullName>
    </alternativeName>
    <alternativeName>
        <fullName>Complex III subunit III</fullName>
    </alternativeName>
    <alternativeName>
        <fullName>Cytochrome b-c1 complex subunit 3</fullName>
    </alternativeName>
    <alternativeName>
        <fullName>Ubiquinol-cytochrome-c reductase complex cytochrome b subunit</fullName>
    </alternativeName>
</protein>
<gene>
    <name type="primary">mt-cyb</name>
    <name type="synonym">cob</name>
    <name type="synonym">cytb</name>
    <name type="synonym">mtcyb</name>
</gene>
<sequence>MASLRKTHPLLKIVNDALIDLPAPSNISAWWNFGSLLGLCLVTQILTGLFLAMHYTSDVATAFSSVAHICRDVNYGWLIRNIHANGASFFFICLYLHIGRGLYYGSYLYKETWNIGVVLFLLVMMTAFVGYVLPWGQMSFWGATVITNLLSAVPYVGDTLVQWIWGGFSVDNATLTRFFAFHFLFPFIIVALTVLHFFFLHETGSNNPTGINSDADKVPFHPYFSYKDLFGLVLLLLALSSLSFFSPNLLGDPDNFIPANPLVTPPHIKPEWYFLFAYAILRSIPNKLGGVLALLASILILMLVPILHTSKQRGLMFRPLTQLLFWILVADVMILTWIGGMPVEHPFIAVGQIASVLYFTLFLILIPTTGWLENKILEWN</sequence>
<accession>Q94SJ5</accession>
<name>CYB_ZENNE</name>
<comment type="function">
    <text evidence="2">Component of the ubiquinol-cytochrome c reductase complex (complex III or cytochrome b-c1 complex) that is part of the mitochondrial respiratory chain. The b-c1 complex mediates electron transfer from ubiquinol to cytochrome c. Contributes to the generation of a proton gradient across the mitochondrial membrane that is then used for ATP synthesis.</text>
</comment>
<comment type="cofactor">
    <cofactor evidence="2">
        <name>heme b</name>
        <dbReference type="ChEBI" id="CHEBI:60344"/>
    </cofactor>
    <text evidence="2">Binds 2 heme b groups non-covalently.</text>
</comment>
<comment type="subunit">
    <text evidence="2">The cytochrome bc1 complex contains 3 respiratory subunits (MT-CYB, CYC1 and UQCRFS1), 2 core proteins (UQCRC1 and UQCRC2) and probably 6 low-molecular weight proteins.</text>
</comment>
<comment type="subcellular location">
    <subcellularLocation>
        <location evidence="2">Mitochondrion inner membrane</location>
        <topology evidence="2">Multi-pass membrane protein</topology>
    </subcellularLocation>
</comment>
<comment type="miscellaneous">
    <text evidence="1">Heme 1 (or BL or b562) is low-potential and absorbs at about 562 nm, and heme 2 (or BH or b566) is high-potential and absorbs at about 566 nm.</text>
</comment>
<comment type="similarity">
    <text evidence="3 4">Belongs to the cytochrome b family.</text>
</comment>
<comment type="caution">
    <text evidence="2">The full-length protein contains only eight transmembrane helices, not nine as predicted by bioinformatics tools.</text>
</comment>
<geneLocation type="mitochondrion"/>
<evidence type="ECO:0000250" key="1"/>
<evidence type="ECO:0000250" key="2">
    <source>
        <dbReference type="UniProtKB" id="P00157"/>
    </source>
</evidence>
<evidence type="ECO:0000255" key="3">
    <source>
        <dbReference type="PROSITE-ProRule" id="PRU00967"/>
    </source>
</evidence>
<evidence type="ECO:0000255" key="4">
    <source>
        <dbReference type="PROSITE-ProRule" id="PRU00968"/>
    </source>
</evidence>
<proteinExistence type="inferred from homology"/>
<keyword id="KW-0249">Electron transport</keyword>
<keyword id="KW-0349">Heme</keyword>
<keyword id="KW-0408">Iron</keyword>
<keyword id="KW-0472">Membrane</keyword>
<keyword id="KW-0479">Metal-binding</keyword>
<keyword id="KW-0496">Mitochondrion</keyword>
<keyword id="KW-0999">Mitochondrion inner membrane</keyword>
<keyword id="KW-0679">Respiratory chain</keyword>
<keyword id="KW-0812">Transmembrane</keyword>
<keyword id="KW-1133">Transmembrane helix</keyword>
<keyword id="KW-0813">Transport</keyword>
<keyword id="KW-0830">Ubiquinone</keyword>
<feature type="chain" id="PRO_0000061729" description="Cytochrome b">
    <location>
        <begin position="1"/>
        <end position="380"/>
    </location>
</feature>
<feature type="transmembrane region" description="Helical" evidence="2">
    <location>
        <begin position="33"/>
        <end position="53"/>
    </location>
</feature>
<feature type="transmembrane region" description="Helical" evidence="2">
    <location>
        <begin position="77"/>
        <end position="98"/>
    </location>
</feature>
<feature type="transmembrane region" description="Helical" evidence="2">
    <location>
        <begin position="113"/>
        <end position="133"/>
    </location>
</feature>
<feature type="transmembrane region" description="Helical" evidence="2">
    <location>
        <begin position="178"/>
        <end position="198"/>
    </location>
</feature>
<feature type="transmembrane region" description="Helical" evidence="2">
    <location>
        <begin position="226"/>
        <end position="246"/>
    </location>
</feature>
<feature type="transmembrane region" description="Helical" evidence="2">
    <location>
        <begin position="288"/>
        <end position="308"/>
    </location>
</feature>
<feature type="transmembrane region" description="Helical" evidence="2">
    <location>
        <begin position="320"/>
        <end position="340"/>
    </location>
</feature>
<feature type="transmembrane region" description="Helical" evidence="2">
    <location>
        <begin position="347"/>
        <end position="367"/>
    </location>
</feature>
<feature type="binding site" description="axial binding residue" evidence="2">
    <location>
        <position position="83"/>
    </location>
    <ligand>
        <name>heme b</name>
        <dbReference type="ChEBI" id="CHEBI:60344"/>
        <label>b562</label>
    </ligand>
    <ligandPart>
        <name>Fe</name>
        <dbReference type="ChEBI" id="CHEBI:18248"/>
    </ligandPart>
</feature>
<feature type="binding site" description="axial binding residue" evidence="2">
    <location>
        <position position="97"/>
    </location>
    <ligand>
        <name>heme b</name>
        <dbReference type="ChEBI" id="CHEBI:60344"/>
        <label>b566</label>
    </ligand>
    <ligandPart>
        <name>Fe</name>
        <dbReference type="ChEBI" id="CHEBI:18248"/>
    </ligandPart>
</feature>
<feature type="binding site" description="axial binding residue" evidence="2">
    <location>
        <position position="182"/>
    </location>
    <ligand>
        <name>heme b</name>
        <dbReference type="ChEBI" id="CHEBI:60344"/>
        <label>b562</label>
    </ligand>
    <ligandPart>
        <name>Fe</name>
        <dbReference type="ChEBI" id="CHEBI:18248"/>
    </ligandPart>
</feature>
<feature type="binding site" description="axial binding residue" evidence="2">
    <location>
        <position position="196"/>
    </location>
    <ligand>
        <name>heme b</name>
        <dbReference type="ChEBI" id="CHEBI:60344"/>
        <label>b566</label>
    </ligand>
    <ligandPart>
        <name>Fe</name>
        <dbReference type="ChEBI" id="CHEBI:18248"/>
    </ligandPart>
</feature>
<feature type="binding site" evidence="2">
    <location>
        <position position="201"/>
    </location>
    <ligand>
        <name>a ubiquinone</name>
        <dbReference type="ChEBI" id="CHEBI:16389"/>
    </ligand>
</feature>
<dbReference type="EMBL" id="AP002942">
    <property type="protein sequence ID" value="BAB70338.1"/>
    <property type="molecule type" value="Genomic_DNA"/>
</dbReference>
<dbReference type="RefSeq" id="NP_443410.1">
    <property type="nucleotide sequence ID" value="NC_003173.1"/>
</dbReference>
<dbReference type="SMR" id="Q94SJ5"/>
<dbReference type="GeneID" id="804075"/>
<dbReference type="CTD" id="4519"/>
<dbReference type="GO" id="GO:0005743">
    <property type="term" value="C:mitochondrial inner membrane"/>
    <property type="evidence" value="ECO:0007669"/>
    <property type="project" value="UniProtKB-SubCell"/>
</dbReference>
<dbReference type="GO" id="GO:0045275">
    <property type="term" value="C:respiratory chain complex III"/>
    <property type="evidence" value="ECO:0007669"/>
    <property type="project" value="InterPro"/>
</dbReference>
<dbReference type="GO" id="GO:0046872">
    <property type="term" value="F:metal ion binding"/>
    <property type="evidence" value="ECO:0007669"/>
    <property type="project" value="UniProtKB-KW"/>
</dbReference>
<dbReference type="GO" id="GO:0008121">
    <property type="term" value="F:ubiquinol-cytochrome-c reductase activity"/>
    <property type="evidence" value="ECO:0007669"/>
    <property type="project" value="InterPro"/>
</dbReference>
<dbReference type="GO" id="GO:0006122">
    <property type="term" value="P:mitochondrial electron transport, ubiquinol to cytochrome c"/>
    <property type="evidence" value="ECO:0007669"/>
    <property type="project" value="TreeGrafter"/>
</dbReference>
<dbReference type="CDD" id="cd00290">
    <property type="entry name" value="cytochrome_b_C"/>
    <property type="match status" value="1"/>
</dbReference>
<dbReference type="CDD" id="cd00284">
    <property type="entry name" value="Cytochrome_b_N"/>
    <property type="match status" value="1"/>
</dbReference>
<dbReference type="FunFam" id="1.20.810.10:FF:000002">
    <property type="entry name" value="Cytochrome b"/>
    <property type="match status" value="1"/>
</dbReference>
<dbReference type="Gene3D" id="1.20.810.10">
    <property type="entry name" value="Cytochrome Bc1 Complex, Chain C"/>
    <property type="match status" value="1"/>
</dbReference>
<dbReference type="InterPro" id="IPR005798">
    <property type="entry name" value="Cyt_b/b6_C"/>
</dbReference>
<dbReference type="InterPro" id="IPR036150">
    <property type="entry name" value="Cyt_b/b6_C_sf"/>
</dbReference>
<dbReference type="InterPro" id="IPR005797">
    <property type="entry name" value="Cyt_b/b6_N"/>
</dbReference>
<dbReference type="InterPro" id="IPR027387">
    <property type="entry name" value="Cytb/b6-like_sf"/>
</dbReference>
<dbReference type="InterPro" id="IPR030689">
    <property type="entry name" value="Cytochrome_b"/>
</dbReference>
<dbReference type="InterPro" id="IPR048260">
    <property type="entry name" value="Cytochrome_b_C_euk/bac"/>
</dbReference>
<dbReference type="InterPro" id="IPR048259">
    <property type="entry name" value="Cytochrome_b_N_euk/bac"/>
</dbReference>
<dbReference type="InterPro" id="IPR016174">
    <property type="entry name" value="Di-haem_cyt_TM"/>
</dbReference>
<dbReference type="PANTHER" id="PTHR19271">
    <property type="entry name" value="CYTOCHROME B"/>
    <property type="match status" value="1"/>
</dbReference>
<dbReference type="PANTHER" id="PTHR19271:SF16">
    <property type="entry name" value="CYTOCHROME B"/>
    <property type="match status" value="1"/>
</dbReference>
<dbReference type="Pfam" id="PF00032">
    <property type="entry name" value="Cytochrom_B_C"/>
    <property type="match status" value="1"/>
</dbReference>
<dbReference type="Pfam" id="PF00033">
    <property type="entry name" value="Cytochrome_B"/>
    <property type="match status" value="1"/>
</dbReference>
<dbReference type="PIRSF" id="PIRSF038885">
    <property type="entry name" value="COB"/>
    <property type="match status" value="1"/>
</dbReference>
<dbReference type="SUPFAM" id="SSF81648">
    <property type="entry name" value="a domain/subunit of cytochrome bc1 complex (Ubiquinol-cytochrome c reductase)"/>
    <property type="match status" value="1"/>
</dbReference>
<dbReference type="SUPFAM" id="SSF81342">
    <property type="entry name" value="Transmembrane di-heme cytochromes"/>
    <property type="match status" value="1"/>
</dbReference>
<dbReference type="PROSITE" id="PS51003">
    <property type="entry name" value="CYTB_CTER"/>
    <property type="match status" value="1"/>
</dbReference>
<dbReference type="PROSITE" id="PS51002">
    <property type="entry name" value="CYTB_NTER"/>
    <property type="match status" value="1"/>
</dbReference>